<accession>Q99MW1</accession>
<accession>B2RQM2</accession>
<accession>E9QLI8</accession>
<reference key="1">
    <citation type="journal article" date="2001" name="Nat. Genet.">
        <title>An abundance of X-linked genes expressed in spermatogonia.</title>
        <authorList>
            <person name="Wang P.J."/>
            <person name="McCarrey J.R."/>
            <person name="Yang F."/>
            <person name="Page D.C."/>
        </authorList>
    </citation>
    <scope>NUCLEOTIDE SEQUENCE [MRNA]</scope>
    <source>
        <tissue>Testis</tissue>
    </source>
</reference>
<reference key="2">
    <citation type="journal article" date="2009" name="PLoS Biol.">
        <title>Lineage-specific biology revealed by a finished genome assembly of the mouse.</title>
        <authorList>
            <person name="Church D.M."/>
            <person name="Goodstadt L."/>
            <person name="Hillier L.W."/>
            <person name="Zody M.C."/>
            <person name="Goldstein S."/>
            <person name="She X."/>
            <person name="Bult C.J."/>
            <person name="Agarwala R."/>
            <person name="Cherry J.L."/>
            <person name="DiCuccio M."/>
            <person name="Hlavina W."/>
            <person name="Kapustin Y."/>
            <person name="Meric P."/>
            <person name="Maglott D."/>
            <person name="Birtle Z."/>
            <person name="Marques A.C."/>
            <person name="Graves T."/>
            <person name="Zhou S."/>
            <person name="Teague B."/>
            <person name="Potamousis K."/>
            <person name="Churas C."/>
            <person name="Place M."/>
            <person name="Herschleb J."/>
            <person name="Runnheim R."/>
            <person name="Forrest D."/>
            <person name="Amos-Landgraf J."/>
            <person name="Schwartz D.C."/>
            <person name="Cheng Z."/>
            <person name="Lindblad-Toh K."/>
            <person name="Eichler E.E."/>
            <person name="Ponting C.P."/>
        </authorList>
    </citation>
    <scope>NUCLEOTIDE SEQUENCE [LARGE SCALE GENOMIC DNA]</scope>
    <source>
        <strain>C57BL/6J</strain>
    </source>
</reference>
<reference key="3">
    <citation type="journal article" date="2004" name="Genome Res.">
        <title>The status, quality, and expansion of the NIH full-length cDNA project: the Mammalian Gene Collection (MGC).</title>
        <authorList>
            <consortium name="The MGC Project Team"/>
        </authorList>
    </citation>
    <scope>NUCLEOTIDE SEQUENCE [LARGE SCALE MRNA]</scope>
    <source>
        <tissue>Brain</tissue>
    </source>
</reference>
<reference key="4">
    <citation type="journal article" date="2010" name="Cell">
        <title>A tissue-specific atlas of mouse protein phosphorylation and expression.</title>
        <authorList>
            <person name="Huttlin E.L."/>
            <person name="Jedrychowski M.P."/>
            <person name="Elias J.E."/>
            <person name="Goswami T."/>
            <person name="Rad R."/>
            <person name="Beausoleil S.A."/>
            <person name="Villen J."/>
            <person name="Haas W."/>
            <person name="Sowa M.E."/>
            <person name="Gygi S.P."/>
        </authorList>
    </citation>
    <scope>IDENTIFICATION BY MASS SPECTROMETRY [LARGE SCALE ANALYSIS]</scope>
    <source>
        <tissue>Testis</tissue>
    </source>
</reference>
<protein>
    <recommendedName>
        <fullName>Serine/threonine-protein kinase 31</fullName>
        <ecNumber>2.7.11.1</ecNumber>
    </recommendedName>
</protein>
<dbReference type="EC" id="2.7.11.1"/>
<dbReference type="EMBL" id="AF285580">
    <property type="protein sequence ID" value="AAK31959.1"/>
    <property type="molecule type" value="mRNA"/>
</dbReference>
<dbReference type="EMBL" id="AC153385">
    <property type="status" value="NOT_ANNOTATED_CDS"/>
    <property type="molecule type" value="Genomic_DNA"/>
</dbReference>
<dbReference type="EMBL" id="BC137989">
    <property type="protein sequence ID" value="AAI37990.1"/>
    <property type="molecule type" value="mRNA"/>
</dbReference>
<dbReference type="CCDS" id="CCDS39487.1"/>
<dbReference type="RefSeq" id="NP_084192.2">
    <property type="nucleotide sequence ID" value="NM_029916.2"/>
</dbReference>
<dbReference type="SMR" id="Q99MW1"/>
<dbReference type="BioGRID" id="218727">
    <property type="interactions" value="2"/>
</dbReference>
<dbReference type="FunCoup" id="Q99MW1">
    <property type="interactions" value="227"/>
</dbReference>
<dbReference type="STRING" id="10090.ENSMUSP00000024171"/>
<dbReference type="iPTMnet" id="Q99MW1"/>
<dbReference type="PhosphoSitePlus" id="Q99MW1"/>
<dbReference type="SwissPalm" id="Q99MW1"/>
<dbReference type="PaxDb" id="10090-ENSMUSP00000024171"/>
<dbReference type="ProteomicsDB" id="257453"/>
<dbReference type="Antibodypedia" id="12132">
    <property type="antibodies" value="240 antibodies from 29 providers"/>
</dbReference>
<dbReference type="DNASU" id="77485"/>
<dbReference type="Ensembl" id="ENSMUST00000024171.14">
    <property type="protein sequence ID" value="ENSMUSP00000024171.8"/>
    <property type="gene ID" value="ENSMUSG00000023403.15"/>
</dbReference>
<dbReference type="GeneID" id="77485"/>
<dbReference type="KEGG" id="mmu:77485"/>
<dbReference type="UCSC" id="uc009bws.2">
    <property type="organism name" value="mouse"/>
</dbReference>
<dbReference type="AGR" id="MGI:1924735"/>
<dbReference type="CTD" id="56164"/>
<dbReference type="MGI" id="MGI:1924735">
    <property type="gene designation" value="Stk31"/>
</dbReference>
<dbReference type="VEuPathDB" id="HostDB:ENSMUSG00000023403"/>
<dbReference type="eggNOG" id="ENOG502QPJA">
    <property type="taxonomic scope" value="Eukaryota"/>
</dbReference>
<dbReference type="GeneTree" id="ENSGT00390000007287"/>
<dbReference type="InParanoid" id="Q99MW1"/>
<dbReference type="OMA" id="HRAWNQQ"/>
<dbReference type="OrthoDB" id="10023235at2759"/>
<dbReference type="PhylomeDB" id="Q99MW1"/>
<dbReference type="TreeFam" id="TF105335"/>
<dbReference type="BioGRID-ORCS" id="77485">
    <property type="hits" value="2 hits in 83 CRISPR screens"/>
</dbReference>
<dbReference type="CD-CODE" id="DE1E139C">
    <property type="entry name" value="Chromatoid body"/>
</dbReference>
<dbReference type="ChiTaRS" id="Stk31">
    <property type="organism name" value="mouse"/>
</dbReference>
<dbReference type="PRO" id="PR:Q99MW1"/>
<dbReference type="Proteomes" id="UP000000589">
    <property type="component" value="Chromosome 6"/>
</dbReference>
<dbReference type="RNAct" id="Q99MW1">
    <property type="molecule type" value="protein"/>
</dbReference>
<dbReference type="Bgee" id="ENSMUSG00000023403">
    <property type="expression patterns" value="Expressed in spermatocyte and 27 other cell types or tissues"/>
</dbReference>
<dbReference type="ExpressionAtlas" id="Q99MW1">
    <property type="expression patterns" value="baseline and differential"/>
</dbReference>
<dbReference type="GO" id="GO:0001669">
    <property type="term" value="C:acrosomal vesicle"/>
    <property type="evidence" value="ECO:0000314"/>
    <property type="project" value="MGI"/>
</dbReference>
<dbReference type="GO" id="GO:0005737">
    <property type="term" value="C:cytoplasm"/>
    <property type="evidence" value="ECO:0000314"/>
    <property type="project" value="MGI"/>
</dbReference>
<dbReference type="GO" id="GO:0005524">
    <property type="term" value="F:ATP binding"/>
    <property type="evidence" value="ECO:0007669"/>
    <property type="project" value="UniProtKB-KW"/>
</dbReference>
<dbReference type="GO" id="GO:0004672">
    <property type="term" value="F:protein kinase activity"/>
    <property type="evidence" value="ECO:0000314"/>
    <property type="project" value="MGI"/>
</dbReference>
<dbReference type="GO" id="GO:0106310">
    <property type="term" value="F:protein serine kinase activity"/>
    <property type="evidence" value="ECO:0007669"/>
    <property type="project" value="RHEA"/>
</dbReference>
<dbReference type="GO" id="GO:0004674">
    <property type="term" value="F:protein serine/threonine kinase activity"/>
    <property type="evidence" value="ECO:0007669"/>
    <property type="project" value="UniProtKB-KW"/>
</dbReference>
<dbReference type="CDD" id="cd20430">
    <property type="entry name" value="Tudor_TDRD8"/>
    <property type="match status" value="1"/>
</dbReference>
<dbReference type="FunFam" id="2.30.30.140:FF:000018">
    <property type="entry name" value="Serine/threonine-protein kinase 31"/>
    <property type="match status" value="1"/>
</dbReference>
<dbReference type="FunFam" id="1.10.510.10:FF:000518">
    <property type="entry name" value="serine/threonine-protein kinase 31 isoform X1"/>
    <property type="match status" value="1"/>
</dbReference>
<dbReference type="Gene3D" id="2.30.30.140">
    <property type="match status" value="1"/>
</dbReference>
<dbReference type="Gene3D" id="2.40.50.90">
    <property type="match status" value="1"/>
</dbReference>
<dbReference type="Gene3D" id="1.10.510.10">
    <property type="entry name" value="Transferase(Phosphotransferase) domain 1"/>
    <property type="match status" value="1"/>
</dbReference>
<dbReference type="InterPro" id="IPR011009">
    <property type="entry name" value="Kinase-like_dom_sf"/>
</dbReference>
<dbReference type="InterPro" id="IPR000719">
    <property type="entry name" value="Prot_kinase_dom"/>
</dbReference>
<dbReference type="InterPro" id="IPR052451">
    <property type="entry name" value="Ser/Thr_kinase-like"/>
</dbReference>
<dbReference type="InterPro" id="IPR035437">
    <property type="entry name" value="SNase_OB-fold_sf"/>
</dbReference>
<dbReference type="InterPro" id="IPR002999">
    <property type="entry name" value="Tudor"/>
</dbReference>
<dbReference type="InterPro" id="IPR047383">
    <property type="entry name" value="Tudor_TDRD8"/>
</dbReference>
<dbReference type="PANTHER" id="PTHR48008">
    <property type="entry name" value="LEUCINE-RICH REPEAT RECEPTOR-LIKE PROTEIN KINASE IMK3-RELATED"/>
    <property type="match status" value="1"/>
</dbReference>
<dbReference type="PANTHER" id="PTHR48008:SF6">
    <property type="entry name" value="LEUCINE-RICH REPEAT RECEPTOR-LIKE PROTEIN KINASE IMK3-RELATED"/>
    <property type="match status" value="1"/>
</dbReference>
<dbReference type="Pfam" id="PF00069">
    <property type="entry name" value="Pkinase"/>
    <property type="match status" value="1"/>
</dbReference>
<dbReference type="Pfam" id="PF00567">
    <property type="entry name" value="TUDOR"/>
    <property type="match status" value="1"/>
</dbReference>
<dbReference type="SMART" id="SM00220">
    <property type="entry name" value="S_TKc"/>
    <property type="match status" value="1"/>
</dbReference>
<dbReference type="SMART" id="SM00333">
    <property type="entry name" value="TUDOR"/>
    <property type="match status" value="1"/>
</dbReference>
<dbReference type="SUPFAM" id="SSF56112">
    <property type="entry name" value="Protein kinase-like (PK-like)"/>
    <property type="match status" value="1"/>
</dbReference>
<dbReference type="SUPFAM" id="SSF50199">
    <property type="entry name" value="Staphylococcal nuclease"/>
    <property type="match status" value="1"/>
</dbReference>
<dbReference type="SUPFAM" id="SSF63748">
    <property type="entry name" value="Tudor/PWWP/MBT"/>
    <property type="match status" value="1"/>
</dbReference>
<dbReference type="PROSITE" id="PS50011">
    <property type="entry name" value="PROTEIN_KINASE_DOM"/>
    <property type="match status" value="1"/>
</dbReference>
<dbReference type="PROSITE" id="PS50304">
    <property type="entry name" value="TUDOR"/>
    <property type="match status" value="1"/>
</dbReference>
<organism>
    <name type="scientific">Mus musculus</name>
    <name type="common">Mouse</name>
    <dbReference type="NCBI Taxonomy" id="10090"/>
    <lineage>
        <taxon>Eukaryota</taxon>
        <taxon>Metazoa</taxon>
        <taxon>Chordata</taxon>
        <taxon>Craniata</taxon>
        <taxon>Vertebrata</taxon>
        <taxon>Euteleostomi</taxon>
        <taxon>Mammalia</taxon>
        <taxon>Eutheria</taxon>
        <taxon>Euarchontoglires</taxon>
        <taxon>Glires</taxon>
        <taxon>Rodentia</taxon>
        <taxon>Myomorpha</taxon>
        <taxon>Muroidea</taxon>
        <taxon>Muridae</taxon>
        <taxon>Murinae</taxon>
        <taxon>Mus</taxon>
        <taxon>Mus</taxon>
    </lineage>
</organism>
<keyword id="KW-0067">ATP-binding</keyword>
<keyword id="KW-0175">Coiled coil</keyword>
<keyword id="KW-0418">Kinase</keyword>
<keyword id="KW-0547">Nucleotide-binding</keyword>
<keyword id="KW-1185">Reference proteome</keyword>
<keyword id="KW-0723">Serine/threonine-protein kinase</keyword>
<keyword id="KW-0808">Transferase</keyword>
<proteinExistence type="evidence at protein level"/>
<evidence type="ECO:0000255" key="1"/>
<evidence type="ECO:0000255" key="2">
    <source>
        <dbReference type="PROSITE-ProRule" id="PRU00159"/>
    </source>
</evidence>
<evidence type="ECO:0000255" key="3">
    <source>
        <dbReference type="PROSITE-ProRule" id="PRU00211"/>
    </source>
</evidence>
<evidence type="ECO:0000256" key="4">
    <source>
        <dbReference type="SAM" id="MobiDB-lite"/>
    </source>
</evidence>
<evidence type="ECO:0000305" key="5"/>
<comment type="catalytic activity">
    <reaction>
        <text>L-seryl-[protein] + ATP = O-phospho-L-seryl-[protein] + ADP + H(+)</text>
        <dbReference type="Rhea" id="RHEA:17989"/>
        <dbReference type="Rhea" id="RHEA-COMP:9863"/>
        <dbReference type="Rhea" id="RHEA-COMP:11604"/>
        <dbReference type="ChEBI" id="CHEBI:15378"/>
        <dbReference type="ChEBI" id="CHEBI:29999"/>
        <dbReference type="ChEBI" id="CHEBI:30616"/>
        <dbReference type="ChEBI" id="CHEBI:83421"/>
        <dbReference type="ChEBI" id="CHEBI:456216"/>
        <dbReference type="EC" id="2.7.11.1"/>
    </reaction>
</comment>
<comment type="catalytic activity">
    <reaction>
        <text>L-threonyl-[protein] + ATP = O-phospho-L-threonyl-[protein] + ADP + H(+)</text>
        <dbReference type="Rhea" id="RHEA:46608"/>
        <dbReference type="Rhea" id="RHEA-COMP:11060"/>
        <dbReference type="Rhea" id="RHEA-COMP:11605"/>
        <dbReference type="ChEBI" id="CHEBI:15378"/>
        <dbReference type="ChEBI" id="CHEBI:30013"/>
        <dbReference type="ChEBI" id="CHEBI:30616"/>
        <dbReference type="ChEBI" id="CHEBI:61977"/>
        <dbReference type="ChEBI" id="CHEBI:456216"/>
        <dbReference type="EC" id="2.7.11.1"/>
    </reaction>
</comment>
<comment type="tissue specificity">
    <text>Testis specific. Expressed only in male germ cells.</text>
</comment>
<comment type="similarity">
    <text evidence="2">Belongs to the protein kinase superfamily. Ser/Thr protein kinase family.</text>
</comment>
<comment type="caution">
    <text evidence="5">Ser-855 is present instead of the conserved Asp which is expected to be an active site residue.</text>
</comment>
<sequence length="1018" mass="115018">MWGQRLFAGTAVAQSVSFPGLVQMDEDTHYNKVEDVVGSHVEDAVTFWAQNVSKNKDIMKIGCSLSEVCPLANSVFGNLDPKKIYGGLFSEDKCWYRCKVLKTISDDKCLVRYIDYGNTEILNRSDIVEIPPELQFSSIAKKYRLWGLQIPSGQEVTQFDQGRTFLGSLIFEKEIKMRIKATYQDGTVIAQAEYGTVDIGEEVAKKGFAEKCRLTSGIDACEAKKPDPNQLALRSLKNPIPLWGRRSNQSTFSRPKGHFNGRLTLDVKYETSAGNHVTFPKESLAAGDFNLGSNVSLAKIKQDQKLIEENEKLKTEKEVLLENYKALELKVEQTAQELQQEKTATMDLTKHLESTLKTCVGTRLKNLAAKVELLKEIRHINISIRFGNDLSDAMQVLDEGSFTTLASLNELEKIWAEYNVAQEKIQTCLNENEGNILIAERNEVQQKLFVAVDVFILEVDDLPLDKRLKTLQDLATSLESVYGKAKEGTNNSEETLRKFYDWQCTKREEFASIRSETEASLQHLVAWFQSSQKVFDLSLDEPLTSEDLIGNIDEILEKTESCVCKELELSLIEQGVIDKEIILSTYSQVLQKIHSEEKFIATLLSKYKDSVEFKKQMIDCLNKNPNVDYLLSIKKTLKGLKAQLRWKLVEKSNLEESDDHDGTEIEKIKQEITQLRNSVFQEIYHEREEYEKLNSLTQKWFPELPLLYPEIGLLKYMNSGGLLTMSLERDLLDTEPMKELSSKRPLVCSEVNGQPVLLKGYSVDVDTEGRVIQRAASYHRACGYAKEESGLLPLIFLFLCKSDPVAYLMVPYYPKANLSAVQASMPLTSEEALKVMKGVARGLHTLHSANIIHGSLHQNNVFALNREQGIVGDYDFTKSESQRASVNAMVGGLSLLSPELKTGKPPSASSDLYAYGCLFLWLSVQNQEFETNEDGIPKVDQFHLDDNVKSLLCSLIYFRSSMTAEQVLNAECFLLPKGKSVPIPEKEIECTQHSREDESKMESLDRYSEKTRNGEANP</sequence>
<feature type="chain" id="PRO_0000086716" description="Serine/threonine-protein kinase 31">
    <location>
        <begin position="1"/>
        <end position="1018"/>
    </location>
</feature>
<feature type="domain" description="Tudor" evidence="3">
    <location>
        <begin position="78"/>
        <end position="137"/>
    </location>
</feature>
<feature type="domain" description="Protein kinase" evidence="2">
    <location>
        <begin position="711"/>
        <end position="1018"/>
    </location>
</feature>
<feature type="region of interest" description="Disordered" evidence="4">
    <location>
        <begin position="988"/>
        <end position="1018"/>
    </location>
</feature>
<feature type="coiled-coil region" evidence="1">
    <location>
        <begin position="298"/>
        <end position="358"/>
    </location>
</feature>
<feature type="binding site" evidence="2">
    <location>
        <begin position="717"/>
        <end position="725"/>
    </location>
    <ligand>
        <name>ATP</name>
        <dbReference type="ChEBI" id="CHEBI:30616"/>
    </ligand>
</feature>
<feature type="binding site" evidence="2">
    <location>
        <position position="738"/>
    </location>
    <ligand>
        <name>ATP</name>
        <dbReference type="ChEBI" id="CHEBI:30616"/>
    </ligand>
</feature>
<feature type="sequence conflict" description="In Ref. 1; AAK31959 and 3; AAI37990." evidence="5" ref="1 3">
    <original>Y</original>
    <variation>F</variation>
    <location>
        <position position="500"/>
    </location>
</feature>
<feature type="sequence conflict" description="In Ref. 1; AAK31959 and 3; AAI37990." evidence="5" ref="1 3">
    <original>S</original>
    <variation>I</variation>
    <location>
        <position position="584"/>
    </location>
</feature>
<gene>
    <name type="primary">Stk31</name>
</gene>
<name>STK31_MOUSE</name>